<gene>
    <name type="primary">MT-CYB</name>
    <name type="synonym">COB</name>
    <name type="synonym">CYTB</name>
    <name type="synonym">MTCYB</name>
</gene>
<geneLocation type="mitochondrion"/>
<feature type="chain" id="PRO_0000255024" description="Cytochrome b">
    <location>
        <begin position="1"/>
        <end position="379"/>
    </location>
</feature>
<feature type="transmembrane region" description="Helical" evidence="2">
    <location>
        <begin position="33"/>
        <end position="53"/>
    </location>
</feature>
<feature type="transmembrane region" description="Helical" evidence="2">
    <location>
        <begin position="77"/>
        <end position="98"/>
    </location>
</feature>
<feature type="transmembrane region" description="Helical" evidence="2">
    <location>
        <begin position="113"/>
        <end position="133"/>
    </location>
</feature>
<feature type="transmembrane region" description="Helical" evidence="2">
    <location>
        <begin position="178"/>
        <end position="198"/>
    </location>
</feature>
<feature type="transmembrane region" description="Helical" evidence="2">
    <location>
        <begin position="226"/>
        <end position="246"/>
    </location>
</feature>
<feature type="transmembrane region" description="Helical" evidence="2">
    <location>
        <begin position="288"/>
        <end position="308"/>
    </location>
</feature>
<feature type="transmembrane region" description="Helical" evidence="2">
    <location>
        <begin position="320"/>
        <end position="340"/>
    </location>
</feature>
<feature type="transmembrane region" description="Helical" evidence="2">
    <location>
        <begin position="347"/>
        <end position="367"/>
    </location>
</feature>
<feature type="binding site" description="axial binding residue" evidence="2">
    <location>
        <position position="83"/>
    </location>
    <ligand>
        <name>heme b</name>
        <dbReference type="ChEBI" id="CHEBI:60344"/>
        <label>b562</label>
    </ligand>
    <ligandPart>
        <name>Fe</name>
        <dbReference type="ChEBI" id="CHEBI:18248"/>
    </ligandPart>
</feature>
<feature type="binding site" description="axial binding residue" evidence="2">
    <location>
        <position position="97"/>
    </location>
    <ligand>
        <name>heme b</name>
        <dbReference type="ChEBI" id="CHEBI:60344"/>
        <label>b566</label>
    </ligand>
    <ligandPart>
        <name>Fe</name>
        <dbReference type="ChEBI" id="CHEBI:18248"/>
    </ligandPart>
</feature>
<feature type="binding site" description="axial binding residue" evidence="2">
    <location>
        <position position="182"/>
    </location>
    <ligand>
        <name>heme b</name>
        <dbReference type="ChEBI" id="CHEBI:60344"/>
        <label>b562</label>
    </ligand>
    <ligandPart>
        <name>Fe</name>
        <dbReference type="ChEBI" id="CHEBI:18248"/>
    </ligandPart>
</feature>
<feature type="binding site" description="axial binding residue" evidence="2">
    <location>
        <position position="196"/>
    </location>
    <ligand>
        <name>heme b</name>
        <dbReference type="ChEBI" id="CHEBI:60344"/>
        <label>b566</label>
    </ligand>
    <ligandPart>
        <name>Fe</name>
        <dbReference type="ChEBI" id="CHEBI:18248"/>
    </ligandPart>
</feature>
<feature type="binding site" evidence="2">
    <location>
        <position position="201"/>
    </location>
    <ligand>
        <name>a ubiquinone</name>
        <dbReference type="ChEBI" id="CHEBI:16389"/>
    </ligand>
</feature>
<proteinExistence type="inferred from homology"/>
<protein>
    <recommendedName>
        <fullName>Cytochrome b</fullName>
    </recommendedName>
    <alternativeName>
        <fullName>Complex III subunit 3</fullName>
    </alternativeName>
    <alternativeName>
        <fullName>Complex III subunit III</fullName>
    </alternativeName>
    <alternativeName>
        <fullName>Cytochrome b-c1 complex subunit 3</fullName>
    </alternativeName>
    <alternativeName>
        <fullName>Ubiquinol-cytochrome-c reductase complex cytochrome b subunit</fullName>
    </alternativeName>
</protein>
<accession>O20539</accession>
<comment type="function">
    <text evidence="2">Component of the ubiquinol-cytochrome c reductase complex (complex III or cytochrome b-c1 complex) that is part of the mitochondrial respiratory chain. The b-c1 complex mediates electron transfer from ubiquinol to cytochrome c. Contributes to the generation of a proton gradient across the mitochondrial membrane that is then used for ATP synthesis.</text>
</comment>
<comment type="cofactor">
    <cofactor evidence="2">
        <name>heme b</name>
        <dbReference type="ChEBI" id="CHEBI:60344"/>
    </cofactor>
    <text evidence="2">Binds 2 heme b groups non-covalently.</text>
</comment>
<comment type="subunit">
    <text evidence="2">The cytochrome bc1 complex contains 11 subunits: 3 respiratory subunits (MT-CYB, CYC1 and UQCRFS1), 2 core proteins (UQCRC1 and UQCRC2) and 6 low-molecular weight proteins (UQCRH/QCR6, UQCRB/QCR7, UQCRQ/QCR8, UQCR10/QCR9, UQCR11/QCR10 and a cleavage product of UQCRFS1). This cytochrome bc1 complex then forms a dimer.</text>
</comment>
<comment type="subcellular location">
    <subcellularLocation>
        <location evidence="2">Mitochondrion inner membrane</location>
        <topology evidence="2">Multi-pass membrane protein</topology>
    </subcellularLocation>
</comment>
<comment type="miscellaneous">
    <text evidence="1">Heme 1 (or BL or b562) is low-potential and absorbs at about 562 nm, and heme 2 (or BH or b566) is high-potential and absorbs at about 566 nm.</text>
</comment>
<comment type="similarity">
    <text evidence="3 4">Belongs to the cytochrome b family.</text>
</comment>
<comment type="caution">
    <text evidence="2">The full-length protein contains only eight transmembrane helices, not nine as predicted by bioinformatics tools.</text>
</comment>
<dbReference type="EMBL" id="AF007049">
    <property type="protein sequence ID" value="AAB69208.1"/>
    <property type="molecule type" value="Genomic_DNA"/>
</dbReference>
<dbReference type="SMR" id="O20539"/>
<dbReference type="GO" id="GO:0005743">
    <property type="term" value="C:mitochondrial inner membrane"/>
    <property type="evidence" value="ECO:0007669"/>
    <property type="project" value="UniProtKB-SubCell"/>
</dbReference>
<dbReference type="GO" id="GO:0045275">
    <property type="term" value="C:respiratory chain complex III"/>
    <property type="evidence" value="ECO:0007669"/>
    <property type="project" value="InterPro"/>
</dbReference>
<dbReference type="GO" id="GO:0046872">
    <property type="term" value="F:metal ion binding"/>
    <property type="evidence" value="ECO:0007669"/>
    <property type="project" value="UniProtKB-KW"/>
</dbReference>
<dbReference type="GO" id="GO:0008121">
    <property type="term" value="F:ubiquinol-cytochrome-c reductase activity"/>
    <property type="evidence" value="ECO:0007669"/>
    <property type="project" value="InterPro"/>
</dbReference>
<dbReference type="GO" id="GO:0006122">
    <property type="term" value="P:mitochondrial electron transport, ubiquinol to cytochrome c"/>
    <property type="evidence" value="ECO:0007669"/>
    <property type="project" value="TreeGrafter"/>
</dbReference>
<dbReference type="CDD" id="cd00290">
    <property type="entry name" value="cytochrome_b_C"/>
    <property type="match status" value="1"/>
</dbReference>
<dbReference type="CDD" id="cd00284">
    <property type="entry name" value="Cytochrome_b_N"/>
    <property type="match status" value="1"/>
</dbReference>
<dbReference type="FunFam" id="1.20.810.10:FF:000002">
    <property type="entry name" value="Cytochrome b"/>
    <property type="match status" value="1"/>
</dbReference>
<dbReference type="Gene3D" id="1.20.810.10">
    <property type="entry name" value="Cytochrome Bc1 Complex, Chain C"/>
    <property type="match status" value="1"/>
</dbReference>
<dbReference type="InterPro" id="IPR005798">
    <property type="entry name" value="Cyt_b/b6_C"/>
</dbReference>
<dbReference type="InterPro" id="IPR036150">
    <property type="entry name" value="Cyt_b/b6_C_sf"/>
</dbReference>
<dbReference type="InterPro" id="IPR005797">
    <property type="entry name" value="Cyt_b/b6_N"/>
</dbReference>
<dbReference type="InterPro" id="IPR027387">
    <property type="entry name" value="Cytb/b6-like_sf"/>
</dbReference>
<dbReference type="InterPro" id="IPR030689">
    <property type="entry name" value="Cytochrome_b"/>
</dbReference>
<dbReference type="InterPro" id="IPR048260">
    <property type="entry name" value="Cytochrome_b_C_euk/bac"/>
</dbReference>
<dbReference type="InterPro" id="IPR048259">
    <property type="entry name" value="Cytochrome_b_N_euk/bac"/>
</dbReference>
<dbReference type="InterPro" id="IPR016174">
    <property type="entry name" value="Di-haem_cyt_TM"/>
</dbReference>
<dbReference type="PANTHER" id="PTHR19271">
    <property type="entry name" value="CYTOCHROME B"/>
    <property type="match status" value="1"/>
</dbReference>
<dbReference type="PANTHER" id="PTHR19271:SF16">
    <property type="entry name" value="CYTOCHROME B"/>
    <property type="match status" value="1"/>
</dbReference>
<dbReference type="Pfam" id="PF00032">
    <property type="entry name" value="Cytochrom_B_C"/>
    <property type="match status" value="1"/>
</dbReference>
<dbReference type="Pfam" id="PF00033">
    <property type="entry name" value="Cytochrome_B"/>
    <property type="match status" value="1"/>
</dbReference>
<dbReference type="PIRSF" id="PIRSF038885">
    <property type="entry name" value="COB"/>
    <property type="match status" value="1"/>
</dbReference>
<dbReference type="SUPFAM" id="SSF81648">
    <property type="entry name" value="a domain/subunit of cytochrome bc1 complex (Ubiquinol-cytochrome c reductase)"/>
    <property type="match status" value="1"/>
</dbReference>
<dbReference type="SUPFAM" id="SSF81342">
    <property type="entry name" value="Transmembrane di-heme cytochromes"/>
    <property type="match status" value="1"/>
</dbReference>
<dbReference type="PROSITE" id="PS51003">
    <property type="entry name" value="CYTB_CTER"/>
    <property type="match status" value="1"/>
</dbReference>
<dbReference type="PROSITE" id="PS51002">
    <property type="entry name" value="CYTB_NTER"/>
    <property type="match status" value="1"/>
</dbReference>
<evidence type="ECO:0000250" key="1"/>
<evidence type="ECO:0000250" key="2">
    <source>
        <dbReference type="UniProtKB" id="P00157"/>
    </source>
</evidence>
<evidence type="ECO:0000255" key="3">
    <source>
        <dbReference type="PROSITE-ProRule" id="PRU00967"/>
    </source>
</evidence>
<evidence type="ECO:0000255" key="4">
    <source>
        <dbReference type="PROSITE-ProRule" id="PRU00968"/>
    </source>
</evidence>
<organism>
    <name type="scientific">Ctenomys lewisi</name>
    <name type="common">Lewis's tuco-tuco</name>
    <dbReference type="NCBI Taxonomy" id="61872"/>
    <lineage>
        <taxon>Eukaryota</taxon>
        <taxon>Metazoa</taxon>
        <taxon>Chordata</taxon>
        <taxon>Craniata</taxon>
        <taxon>Vertebrata</taxon>
        <taxon>Euteleostomi</taxon>
        <taxon>Mammalia</taxon>
        <taxon>Eutheria</taxon>
        <taxon>Euarchontoglires</taxon>
        <taxon>Glires</taxon>
        <taxon>Rodentia</taxon>
        <taxon>Hystricomorpha</taxon>
        <taxon>Ctenomyidae</taxon>
        <taxon>Ctenomys</taxon>
    </lineage>
</organism>
<sequence>MTNTRKSHPLIKIVNHSFIDLPTPSNISAWWNFGSLLGVCLGLQILTGLFLAMHYTADTTTAFSSVTHICRDVNYGWLIRYMHANGASMFFIFLYFHIGRGIYYGSYTFMDTWNIGILLLFAVMATAFMGYVLPWGQMSFWGATVITNLLSAIPYIGPTLVEWIWGGFSVDKATLTRFFAFHFILPFIITAMVMIHLLFLHETGSNNPSGMNSDSDKIPFHPYYTIKDILGVLFMMIMLMSLVMFTPDLLGDPDNYTPANPLNTPPHIKPEWYFLFAYAILRSIPNKLGGVLALVSSILILMLFPITHLSKQRSMSFRPFSQCLMWLLVANLFILTWIGGQPVEHPFIIIGQLASMTYLFTILILMPSTALMENKLLKW</sequence>
<reference key="1">
    <citation type="journal article" date="1998" name="Mol. Phylogenet. Evol.">
        <title>The molecular phylogenetics of tuco-tucos (genus Ctenomys, Rodentia: Octodontidae) suggests an early burst of speciation.</title>
        <authorList>
            <person name="Lessa E.P."/>
            <person name="Cook J.A."/>
        </authorList>
    </citation>
    <scope>NUCLEOTIDE SEQUENCE [GENOMIC DNA]</scope>
</reference>
<keyword id="KW-0249">Electron transport</keyword>
<keyword id="KW-0349">Heme</keyword>
<keyword id="KW-0408">Iron</keyword>
<keyword id="KW-0472">Membrane</keyword>
<keyword id="KW-0479">Metal-binding</keyword>
<keyword id="KW-0496">Mitochondrion</keyword>
<keyword id="KW-0999">Mitochondrion inner membrane</keyword>
<keyword id="KW-0679">Respiratory chain</keyword>
<keyword id="KW-0812">Transmembrane</keyword>
<keyword id="KW-1133">Transmembrane helix</keyword>
<keyword id="KW-0813">Transport</keyword>
<keyword id="KW-0830">Ubiquinone</keyword>
<name>CYB_CTELW</name>